<accession>P79810</accession>
<organism>
    <name type="scientific">Naja atra</name>
    <name type="common">Chinese cobra</name>
    <dbReference type="NCBI Taxonomy" id="8656"/>
    <lineage>
        <taxon>Eukaryota</taxon>
        <taxon>Metazoa</taxon>
        <taxon>Chordata</taxon>
        <taxon>Craniata</taxon>
        <taxon>Vertebrata</taxon>
        <taxon>Euteleostomi</taxon>
        <taxon>Lepidosauria</taxon>
        <taxon>Squamata</taxon>
        <taxon>Bifurcata</taxon>
        <taxon>Unidentata</taxon>
        <taxon>Episquamata</taxon>
        <taxon>Toxicofera</taxon>
        <taxon>Serpentes</taxon>
        <taxon>Colubroidea</taxon>
        <taxon>Elapidae</taxon>
        <taxon>Elapinae</taxon>
        <taxon>Naja</taxon>
    </lineage>
</organism>
<comment type="function">
    <text evidence="2 3">Shows cytolytic activity on many different cells by forming pore in lipid membranes. In vivo, increases heart rate or kills the animal by cardiac arrest. In addition, it binds to heparin with high affinity, interacts with Kv channel-interacting protein 1 (KCNIP1) in a calcium-independent manner, and binds to integrin alpha-V/beta-3 (ITGAV/ITGB3) with moderate affinity.</text>
</comment>
<comment type="subunit">
    <text evidence="2">Monomer in solution; Homodimer and oligomer in the presence of negatively charged lipids forming a pore with a size ranging between 20 and 30 Angstroms.</text>
</comment>
<comment type="subcellular location">
    <subcellularLocation>
        <location evidence="1">Secreted</location>
    </subcellularLocation>
    <subcellularLocation>
        <location evidence="2">Target cell membrane</location>
    </subcellularLocation>
</comment>
<comment type="tissue specificity">
    <text evidence="4">Expressed by the venom gland.</text>
</comment>
<comment type="miscellaneous">
    <text evidence="4">Is classified as a S-type cytotoxin, since a serine residue stands at position 49 (Ser-29 in standard classification).</text>
</comment>
<comment type="similarity">
    <text evidence="4">Belongs to the three-finger toxin family. Short-chain subfamily. Type IA cytotoxin sub-subfamily.</text>
</comment>
<evidence type="ECO:0000250" key="1"/>
<evidence type="ECO:0000250" key="2">
    <source>
        <dbReference type="UniProtKB" id="P60301"/>
    </source>
</evidence>
<evidence type="ECO:0000250" key="3">
    <source>
        <dbReference type="UniProtKB" id="P60304"/>
    </source>
</evidence>
<evidence type="ECO:0000305" key="4"/>
<feature type="signal peptide" evidence="1">
    <location>
        <begin position="1"/>
        <end position="21"/>
    </location>
</feature>
<feature type="chain" id="PRO_0000035368" description="Cytotoxin 1c">
    <location>
        <begin position="22"/>
        <end position="81"/>
    </location>
</feature>
<feature type="disulfide bond" evidence="2">
    <location>
        <begin position="24"/>
        <end position="42"/>
    </location>
</feature>
<feature type="disulfide bond" evidence="2">
    <location>
        <begin position="35"/>
        <end position="59"/>
    </location>
</feature>
<feature type="disulfide bond" evidence="2">
    <location>
        <begin position="63"/>
        <end position="74"/>
    </location>
</feature>
<feature type="disulfide bond" evidence="2">
    <location>
        <begin position="75"/>
        <end position="80"/>
    </location>
</feature>
<keyword id="KW-0123">Cardiotoxin</keyword>
<keyword id="KW-0204">Cytolysis</keyword>
<keyword id="KW-1015">Disulfide bond</keyword>
<keyword id="KW-0472">Membrane</keyword>
<keyword id="KW-0964">Secreted</keyword>
<keyword id="KW-0732">Signal</keyword>
<keyword id="KW-1052">Target cell membrane</keyword>
<keyword id="KW-1053">Target membrane</keyword>
<keyword id="KW-0800">Toxin</keyword>
<protein>
    <recommendedName>
        <fullName>Cytotoxin 1c</fullName>
    </recommendedName>
    <alternativeName>
        <fullName>Cardiotoxin-1c</fullName>
    </alternativeName>
</protein>
<name>3SA1C_NAJAT</name>
<dbReference type="EMBL" id="U77487">
    <property type="protein sequence ID" value="AAB36927.1"/>
    <property type="molecule type" value="mRNA"/>
</dbReference>
<dbReference type="SMR" id="P79810"/>
<dbReference type="GO" id="GO:0005576">
    <property type="term" value="C:extracellular region"/>
    <property type="evidence" value="ECO:0007669"/>
    <property type="project" value="UniProtKB-SubCell"/>
</dbReference>
<dbReference type="GO" id="GO:0016020">
    <property type="term" value="C:membrane"/>
    <property type="evidence" value="ECO:0007669"/>
    <property type="project" value="UniProtKB-KW"/>
</dbReference>
<dbReference type="GO" id="GO:0044218">
    <property type="term" value="C:other organism cell membrane"/>
    <property type="evidence" value="ECO:0007669"/>
    <property type="project" value="UniProtKB-KW"/>
</dbReference>
<dbReference type="GO" id="GO:0090729">
    <property type="term" value="F:toxin activity"/>
    <property type="evidence" value="ECO:0007669"/>
    <property type="project" value="UniProtKB-KW"/>
</dbReference>
<dbReference type="GO" id="GO:0031640">
    <property type="term" value="P:killing of cells of another organism"/>
    <property type="evidence" value="ECO:0007669"/>
    <property type="project" value="UniProtKB-KW"/>
</dbReference>
<dbReference type="CDD" id="cd00206">
    <property type="entry name" value="TFP_snake_toxin"/>
    <property type="match status" value="1"/>
</dbReference>
<dbReference type="FunFam" id="2.10.60.10:FF:000024">
    <property type="entry name" value="Cytotoxin 1"/>
    <property type="match status" value="1"/>
</dbReference>
<dbReference type="Gene3D" id="2.10.60.10">
    <property type="entry name" value="CD59"/>
    <property type="match status" value="1"/>
</dbReference>
<dbReference type="InterPro" id="IPR003572">
    <property type="entry name" value="Cytotoxin_Cobra"/>
</dbReference>
<dbReference type="InterPro" id="IPR003571">
    <property type="entry name" value="Snake_3FTx"/>
</dbReference>
<dbReference type="InterPro" id="IPR045860">
    <property type="entry name" value="Snake_toxin-like_sf"/>
</dbReference>
<dbReference type="InterPro" id="IPR018354">
    <property type="entry name" value="Snake_toxin_con_site"/>
</dbReference>
<dbReference type="InterPro" id="IPR054131">
    <property type="entry name" value="Toxin_cobra-type"/>
</dbReference>
<dbReference type="Pfam" id="PF21947">
    <property type="entry name" value="Toxin_cobra-type"/>
    <property type="match status" value="1"/>
</dbReference>
<dbReference type="PRINTS" id="PR00282">
    <property type="entry name" value="CYTOTOXIN"/>
</dbReference>
<dbReference type="SUPFAM" id="SSF57302">
    <property type="entry name" value="Snake toxin-like"/>
    <property type="match status" value="1"/>
</dbReference>
<dbReference type="PROSITE" id="PS00272">
    <property type="entry name" value="SNAKE_TOXIN"/>
    <property type="match status" value="1"/>
</dbReference>
<sequence length="81" mass="9016">MKTLLLTLVVVTIVCLDLGYTLKCNKLIPIASKTCPAGKNLCYKMFMMSDLTIPVKRGCIDVCPKNSHLVKYVCCNTDRCN</sequence>
<reference key="1">
    <citation type="submission" date="1996-11" db="EMBL/GenBank/DDBJ databases">
        <authorList>
            <person name="Chu R.C."/>
            <person name="Yang C.-C."/>
        </authorList>
    </citation>
    <scope>NUCLEOTIDE SEQUENCE [MRNA]</scope>
    <source>
        <tissue>Venom gland</tissue>
    </source>
</reference>
<proteinExistence type="inferred from homology"/>